<protein>
    <recommendedName>
        <fullName evidence="1">Nucleotide-binding protein AZOSEA28950</fullName>
    </recommendedName>
</protein>
<gene>
    <name type="ordered locus">AZOSEA28950</name>
    <name type="ORF">ebA5101</name>
</gene>
<comment type="function">
    <text evidence="1">Nucleotide-binding protein.</text>
</comment>
<comment type="similarity">
    <text evidence="1">Belongs to the YajQ family.</text>
</comment>
<sequence length="161" mass="18111">MPSFDIMSEVDLPSLKNAVDVANRKISGRYDFKGSDARVEQGEKVLTLFGDSDFQIDQMRQILLPEMTSKKIDVRCLEYGDLQKIGGNKLKQELKVRVGVEQDLAKKIVKLLKDSKLKVQAAIQGEAIRVSGAKRDILQEAIALVKKEITDFPLQFGNFRD</sequence>
<accession>Q5P0Z4</accession>
<feature type="chain" id="PRO_0000261914" description="Nucleotide-binding protein AZOSEA28950">
    <location>
        <begin position="1"/>
        <end position="161"/>
    </location>
</feature>
<keyword id="KW-0547">Nucleotide-binding</keyword>
<keyword id="KW-1185">Reference proteome</keyword>
<evidence type="ECO:0000255" key="1">
    <source>
        <dbReference type="HAMAP-Rule" id="MF_00632"/>
    </source>
</evidence>
<reference key="1">
    <citation type="journal article" date="2005" name="Arch. Microbiol.">
        <title>The genome sequence of an anaerobic aromatic-degrading denitrifying bacterium, strain EbN1.</title>
        <authorList>
            <person name="Rabus R."/>
            <person name="Kube M."/>
            <person name="Heider J."/>
            <person name="Beck A."/>
            <person name="Heitmann K."/>
            <person name="Widdel F."/>
            <person name="Reinhardt R."/>
        </authorList>
    </citation>
    <scope>NUCLEOTIDE SEQUENCE [LARGE SCALE GENOMIC DNA]</scope>
    <source>
        <strain>DSM 19018 / LMG 30748 / EbN1</strain>
    </source>
</reference>
<dbReference type="EMBL" id="CR555306">
    <property type="protein sequence ID" value="CAI09020.1"/>
    <property type="molecule type" value="Genomic_DNA"/>
</dbReference>
<dbReference type="RefSeq" id="WP_011238701.1">
    <property type="nucleotide sequence ID" value="NC_006513.1"/>
</dbReference>
<dbReference type="SMR" id="Q5P0Z4"/>
<dbReference type="STRING" id="76114.ebA5101"/>
<dbReference type="KEGG" id="eba:ebA5101"/>
<dbReference type="eggNOG" id="COG1666">
    <property type="taxonomic scope" value="Bacteria"/>
</dbReference>
<dbReference type="HOGENOM" id="CLU_099839_1_0_4"/>
<dbReference type="OrthoDB" id="9801447at2"/>
<dbReference type="Proteomes" id="UP000006552">
    <property type="component" value="Chromosome"/>
</dbReference>
<dbReference type="GO" id="GO:0005829">
    <property type="term" value="C:cytosol"/>
    <property type="evidence" value="ECO:0007669"/>
    <property type="project" value="TreeGrafter"/>
</dbReference>
<dbReference type="GO" id="GO:0000166">
    <property type="term" value="F:nucleotide binding"/>
    <property type="evidence" value="ECO:0007669"/>
    <property type="project" value="TreeGrafter"/>
</dbReference>
<dbReference type="CDD" id="cd11740">
    <property type="entry name" value="YajQ_like"/>
    <property type="match status" value="1"/>
</dbReference>
<dbReference type="Gene3D" id="3.30.70.860">
    <property type="match status" value="1"/>
</dbReference>
<dbReference type="Gene3D" id="3.30.70.990">
    <property type="entry name" value="YajQ-like, domain 2"/>
    <property type="match status" value="1"/>
</dbReference>
<dbReference type="HAMAP" id="MF_00632">
    <property type="entry name" value="YajQ"/>
    <property type="match status" value="1"/>
</dbReference>
<dbReference type="InterPro" id="IPR007551">
    <property type="entry name" value="DUF520"/>
</dbReference>
<dbReference type="InterPro" id="IPR035571">
    <property type="entry name" value="UPF0234-like_C"/>
</dbReference>
<dbReference type="InterPro" id="IPR035570">
    <property type="entry name" value="UPF0234_N"/>
</dbReference>
<dbReference type="InterPro" id="IPR036183">
    <property type="entry name" value="YajQ-like_sf"/>
</dbReference>
<dbReference type="NCBIfam" id="NF003819">
    <property type="entry name" value="PRK05412.1"/>
    <property type="match status" value="1"/>
</dbReference>
<dbReference type="PANTHER" id="PTHR30476">
    <property type="entry name" value="UPF0234 PROTEIN YAJQ"/>
    <property type="match status" value="1"/>
</dbReference>
<dbReference type="PANTHER" id="PTHR30476:SF0">
    <property type="entry name" value="UPF0234 PROTEIN YAJQ"/>
    <property type="match status" value="1"/>
</dbReference>
<dbReference type="Pfam" id="PF04461">
    <property type="entry name" value="DUF520"/>
    <property type="match status" value="1"/>
</dbReference>
<dbReference type="SUPFAM" id="SSF89963">
    <property type="entry name" value="YajQ-like"/>
    <property type="match status" value="2"/>
</dbReference>
<proteinExistence type="inferred from homology"/>
<name>Y2895_AROAE</name>
<organism>
    <name type="scientific">Aromatoleum aromaticum (strain DSM 19018 / LMG 30748 / EbN1)</name>
    <name type="common">Azoarcus sp. (strain EbN1)</name>
    <dbReference type="NCBI Taxonomy" id="76114"/>
    <lineage>
        <taxon>Bacteria</taxon>
        <taxon>Pseudomonadati</taxon>
        <taxon>Pseudomonadota</taxon>
        <taxon>Betaproteobacteria</taxon>
        <taxon>Rhodocyclales</taxon>
        <taxon>Rhodocyclaceae</taxon>
        <taxon>Aromatoleum</taxon>
    </lineage>
</organism>